<dbReference type="EMBL" id="AAHF01000003">
    <property type="protein sequence ID" value="EAL92020.1"/>
    <property type="molecule type" value="Genomic_DNA"/>
</dbReference>
<dbReference type="RefSeq" id="XP_754058.1">
    <property type="nucleotide sequence ID" value="XM_748965.1"/>
</dbReference>
<dbReference type="SMR" id="Q4WTQ6"/>
<dbReference type="FunCoup" id="Q4WTQ6">
    <property type="interactions" value="540"/>
</dbReference>
<dbReference type="STRING" id="330879.Q4WTQ6"/>
<dbReference type="EnsemblFungi" id="EAL92020">
    <property type="protein sequence ID" value="EAL92020"/>
    <property type="gene ID" value="AFUA_5G05740"/>
</dbReference>
<dbReference type="GeneID" id="3510765"/>
<dbReference type="KEGG" id="afm:AFUA_5G05740"/>
<dbReference type="VEuPathDB" id="FungiDB:Afu5g05740"/>
<dbReference type="eggNOG" id="KOG1444">
    <property type="taxonomic scope" value="Eukaryota"/>
</dbReference>
<dbReference type="HOGENOM" id="CLU_025360_1_2_1"/>
<dbReference type="InParanoid" id="Q4WTQ6"/>
<dbReference type="OMA" id="VWMLINC"/>
<dbReference type="OrthoDB" id="417037at2759"/>
<dbReference type="Proteomes" id="UP000002530">
    <property type="component" value="Chromosome 5"/>
</dbReference>
<dbReference type="GO" id="GO:0030659">
    <property type="term" value="C:cytoplasmic vesicle membrane"/>
    <property type="evidence" value="ECO:0007669"/>
    <property type="project" value="UniProtKB-SubCell"/>
</dbReference>
<dbReference type="GO" id="GO:0005789">
    <property type="term" value="C:endoplasmic reticulum membrane"/>
    <property type="evidence" value="ECO:0007669"/>
    <property type="project" value="UniProtKB-SubCell"/>
</dbReference>
<dbReference type="GO" id="GO:0005794">
    <property type="term" value="C:Golgi apparatus"/>
    <property type="evidence" value="ECO:0000318"/>
    <property type="project" value="GO_Central"/>
</dbReference>
<dbReference type="GO" id="GO:0000139">
    <property type="term" value="C:Golgi membrane"/>
    <property type="evidence" value="ECO:0007669"/>
    <property type="project" value="UniProtKB-SubCell"/>
</dbReference>
<dbReference type="GO" id="GO:0015297">
    <property type="term" value="F:antiporter activity"/>
    <property type="evidence" value="ECO:0000318"/>
    <property type="project" value="GO_Central"/>
</dbReference>
<dbReference type="GO" id="GO:0005458">
    <property type="term" value="F:GDP-mannose transmembrane transporter activity"/>
    <property type="evidence" value="ECO:0000315"/>
    <property type="project" value="AspGD"/>
</dbReference>
<dbReference type="GO" id="GO:0051278">
    <property type="term" value="P:fungal-type cell wall polysaccharide biosynthetic process"/>
    <property type="evidence" value="ECO:0000315"/>
    <property type="project" value="AspGD"/>
</dbReference>
<dbReference type="GO" id="GO:1990570">
    <property type="term" value="P:GDP-mannose transmembrane transport"/>
    <property type="evidence" value="ECO:0000315"/>
    <property type="project" value="AspGD"/>
</dbReference>
<dbReference type="InterPro" id="IPR013657">
    <property type="entry name" value="SCL35B1-4/HUT1"/>
</dbReference>
<dbReference type="InterPro" id="IPR050186">
    <property type="entry name" value="TPT_transporter"/>
</dbReference>
<dbReference type="NCBIfam" id="TIGR00803">
    <property type="entry name" value="nst"/>
    <property type="match status" value="1"/>
</dbReference>
<dbReference type="PANTHER" id="PTHR11132">
    <property type="entry name" value="SOLUTE CARRIER FAMILY 35"/>
    <property type="match status" value="1"/>
</dbReference>
<dbReference type="Pfam" id="PF08449">
    <property type="entry name" value="UAA"/>
    <property type="match status" value="1"/>
</dbReference>
<dbReference type="SUPFAM" id="SSF103481">
    <property type="entry name" value="Multidrug resistance efflux transporter EmrE"/>
    <property type="match status" value="1"/>
</dbReference>
<proteinExistence type="inferred from homology"/>
<protein>
    <recommendedName>
        <fullName>GDP-mannose transporter</fullName>
        <shortName>GMT</shortName>
    </recommendedName>
</protein>
<organism>
    <name type="scientific">Aspergillus fumigatus (strain ATCC MYA-4609 / CBS 101355 / FGSC A1100 / Af293)</name>
    <name type="common">Neosartorya fumigata</name>
    <dbReference type="NCBI Taxonomy" id="330879"/>
    <lineage>
        <taxon>Eukaryota</taxon>
        <taxon>Fungi</taxon>
        <taxon>Dikarya</taxon>
        <taxon>Ascomycota</taxon>
        <taxon>Pezizomycotina</taxon>
        <taxon>Eurotiomycetes</taxon>
        <taxon>Eurotiomycetidae</taxon>
        <taxon>Eurotiales</taxon>
        <taxon>Aspergillaceae</taxon>
        <taxon>Aspergillus</taxon>
        <taxon>Aspergillus subgen. Fumigati</taxon>
    </lineage>
</organism>
<gene>
    <name type="primary">gmt1</name>
    <name type="synonym">vrg4</name>
    <name type="ORF">AFUA_5G05740</name>
</gene>
<comment type="function">
    <text evidence="1">Involved in the import of GDP-mannose from the cytoplasm into the Golgi lumen.</text>
</comment>
<comment type="subunit">
    <text evidence="1">Homooligomer.</text>
</comment>
<comment type="subcellular location">
    <subcellularLocation>
        <location evidence="1">Golgi apparatus membrane</location>
        <topology evidence="1">Multi-pass membrane protein</topology>
    </subcellularLocation>
    <subcellularLocation>
        <location evidence="1">Cytoplasmic vesicle membrane</location>
        <topology evidence="1">Multi-pass membrane protein</topology>
    </subcellularLocation>
    <subcellularLocation>
        <location evidence="1">Endoplasmic reticulum membrane</location>
        <topology evidence="1">Multi-pass membrane protein</topology>
    </subcellularLocation>
</comment>
<comment type="similarity">
    <text evidence="4">Belongs to the TPT transporter family. SLC35D subfamily.</text>
</comment>
<feature type="chain" id="PRO_0000333509" description="GDP-mannose transporter">
    <location>
        <begin position="1"/>
        <end position="382"/>
    </location>
</feature>
<feature type="topological domain" description="Cytoplasmic" evidence="1">
    <location>
        <begin position="1"/>
        <end position="40"/>
    </location>
</feature>
<feature type="transmembrane region" description="Helical" evidence="2">
    <location>
        <begin position="41"/>
        <end position="61"/>
    </location>
</feature>
<feature type="topological domain" description="Lumenal" evidence="1">
    <location>
        <begin position="62"/>
        <end position="71"/>
    </location>
</feature>
<feature type="transmembrane region" description="Helical" evidence="2">
    <location>
        <begin position="72"/>
        <end position="92"/>
    </location>
</feature>
<feature type="topological domain" description="Cytoplasmic" evidence="1">
    <location>
        <begin position="93"/>
        <end position="110"/>
    </location>
</feature>
<feature type="transmembrane region" description="Helical" evidence="2">
    <location>
        <begin position="111"/>
        <end position="127"/>
    </location>
</feature>
<feature type="topological domain" description="Lumenal" evidence="1">
    <location>
        <begin position="128"/>
        <end position="134"/>
    </location>
</feature>
<feature type="transmembrane region" description="Helical" evidence="2">
    <location>
        <begin position="135"/>
        <end position="151"/>
    </location>
</feature>
<feature type="topological domain" description="Cytoplasmic" evidence="1">
    <location>
        <begin position="152"/>
        <end position="160"/>
    </location>
</feature>
<feature type="transmembrane region" description="Helical" evidence="2">
    <location>
        <begin position="161"/>
        <end position="182"/>
    </location>
</feature>
<feature type="topological domain" description="Lumenal" evidence="1">
    <location>
        <begin position="183"/>
        <end position="200"/>
    </location>
</feature>
<feature type="transmembrane region" description="Helical" evidence="2">
    <location>
        <begin position="201"/>
        <end position="221"/>
    </location>
</feature>
<feature type="topological domain" description="Cytoplasmic" evidence="1">
    <location>
        <begin position="222"/>
        <end position="233"/>
    </location>
</feature>
<feature type="transmembrane region" description="Helical" evidence="2">
    <location>
        <begin position="234"/>
        <end position="254"/>
    </location>
</feature>
<feature type="topological domain" description="Lumenal" evidence="1">
    <location>
        <begin position="255"/>
        <end position="274"/>
    </location>
</feature>
<feature type="transmembrane region" description="Helical" evidence="2">
    <location>
        <begin position="275"/>
        <end position="295"/>
    </location>
</feature>
<feature type="topological domain" description="Cytoplasmic" evidence="1">
    <location>
        <begin position="296"/>
        <end position="303"/>
    </location>
</feature>
<feature type="transmembrane region" description="Helical" evidence="2">
    <location>
        <begin position="304"/>
        <end position="324"/>
    </location>
</feature>
<feature type="topological domain" description="Lumenal" evidence="1">
    <location>
        <begin position="325"/>
        <end position="327"/>
    </location>
</feature>
<feature type="transmembrane region" description="Helical" evidence="2">
    <location>
        <begin position="328"/>
        <end position="348"/>
    </location>
</feature>
<feature type="topological domain" description="Cytoplasmic" evidence="1">
    <location>
        <begin position="349"/>
        <end position="382"/>
    </location>
</feature>
<feature type="region of interest" description="Disordered" evidence="3">
    <location>
        <begin position="358"/>
        <end position="382"/>
    </location>
</feature>
<feature type="compositionally biased region" description="Polar residues" evidence="3">
    <location>
        <begin position="367"/>
        <end position="382"/>
    </location>
</feature>
<name>GMT_ASPFU</name>
<keyword id="KW-0968">Cytoplasmic vesicle</keyword>
<keyword id="KW-0256">Endoplasmic reticulum</keyword>
<keyword id="KW-0333">Golgi apparatus</keyword>
<keyword id="KW-0472">Membrane</keyword>
<keyword id="KW-1185">Reference proteome</keyword>
<keyword id="KW-0762">Sugar transport</keyword>
<keyword id="KW-0812">Transmembrane</keyword>
<keyword id="KW-1133">Transmembrane helix</keyword>
<keyword id="KW-0813">Transport</keyword>
<accession>Q4WTQ6</accession>
<sequence length="382" mass="41858">MADDKKTNEYTIEMDKLDHGNKDFEAPAPAVRPRGPPVAQLANNPILPVLAYCGSSILMTVMNKYVLSGRDFNLNFFLLCVQSIVCIVAIQTCKVSKLITYRDFNSDEAKKWFPITLLLIGMIYTGSKALQYLSIPVYTIFKNLTIILIAYGEVLWFGGSVTGLTLFSFGLMVLSSIIAAWADIKHAVESSGDATAKVSTLNAGYIWMLINCLCTSSYVLGMRKRIKLTNFKDFDTMFYNNLLSIPVLLVLTFLMEDWSSANIARNFPSTDRNGILFAMILSGLSSVFISYTSAWCVRVTSSTTYSMVGALNKLPIALSGLIFFDAPVTFPSVSAIVVGFISGIVYAVAKIKQSAKPKTGVLPMSNPPVSASSQSMRDSLRS</sequence>
<reference key="1">
    <citation type="journal article" date="2005" name="Nature">
        <title>Genomic sequence of the pathogenic and allergenic filamentous fungus Aspergillus fumigatus.</title>
        <authorList>
            <person name="Nierman W.C."/>
            <person name="Pain A."/>
            <person name="Anderson M.J."/>
            <person name="Wortman J.R."/>
            <person name="Kim H.S."/>
            <person name="Arroyo J."/>
            <person name="Berriman M."/>
            <person name="Abe K."/>
            <person name="Archer D.B."/>
            <person name="Bermejo C."/>
            <person name="Bennett J.W."/>
            <person name="Bowyer P."/>
            <person name="Chen D."/>
            <person name="Collins M."/>
            <person name="Coulsen R."/>
            <person name="Davies R."/>
            <person name="Dyer P.S."/>
            <person name="Farman M.L."/>
            <person name="Fedorova N."/>
            <person name="Fedorova N.D."/>
            <person name="Feldblyum T.V."/>
            <person name="Fischer R."/>
            <person name="Fosker N."/>
            <person name="Fraser A."/>
            <person name="Garcia J.L."/>
            <person name="Garcia M.J."/>
            <person name="Goble A."/>
            <person name="Goldman G.H."/>
            <person name="Gomi K."/>
            <person name="Griffith-Jones S."/>
            <person name="Gwilliam R."/>
            <person name="Haas B.J."/>
            <person name="Haas H."/>
            <person name="Harris D.E."/>
            <person name="Horiuchi H."/>
            <person name="Huang J."/>
            <person name="Humphray S."/>
            <person name="Jimenez J."/>
            <person name="Keller N."/>
            <person name="Khouri H."/>
            <person name="Kitamoto K."/>
            <person name="Kobayashi T."/>
            <person name="Konzack S."/>
            <person name="Kulkarni R."/>
            <person name="Kumagai T."/>
            <person name="Lafton A."/>
            <person name="Latge J.-P."/>
            <person name="Li W."/>
            <person name="Lord A."/>
            <person name="Lu C."/>
            <person name="Majoros W.H."/>
            <person name="May G.S."/>
            <person name="Miller B.L."/>
            <person name="Mohamoud Y."/>
            <person name="Molina M."/>
            <person name="Monod M."/>
            <person name="Mouyna I."/>
            <person name="Mulligan S."/>
            <person name="Murphy L.D."/>
            <person name="O'Neil S."/>
            <person name="Paulsen I."/>
            <person name="Penalva M.A."/>
            <person name="Pertea M."/>
            <person name="Price C."/>
            <person name="Pritchard B.L."/>
            <person name="Quail M.A."/>
            <person name="Rabbinowitsch E."/>
            <person name="Rawlins N."/>
            <person name="Rajandream M.A."/>
            <person name="Reichard U."/>
            <person name="Renauld H."/>
            <person name="Robson G.D."/>
            <person name="Rodriguez de Cordoba S."/>
            <person name="Rodriguez-Pena J.M."/>
            <person name="Ronning C.M."/>
            <person name="Rutter S."/>
            <person name="Salzberg S.L."/>
            <person name="Sanchez M."/>
            <person name="Sanchez-Ferrero J.C."/>
            <person name="Saunders D."/>
            <person name="Seeger K."/>
            <person name="Squares R."/>
            <person name="Squares S."/>
            <person name="Takeuchi M."/>
            <person name="Tekaia F."/>
            <person name="Turner G."/>
            <person name="Vazquez de Aldana C.R."/>
            <person name="Weidman J."/>
            <person name="White O."/>
            <person name="Woodward J.R."/>
            <person name="Yu J.-H."/>
            <person name="Fraser C.M."/>
            <person name="Galagan J.E."/>
            <person name="Asai K."/>
            <person name="Machida M."/>
            <person name="Hall N."/>
            <person name="Barrell B.G."/>
            <person name="Denning D.W."/>
        </authorList>
    </citation>
    <scope>NUCLEOTIDE SEQUENCE [LARGE SCALE GENOMIC DNA]</scope>
    <source>
        <strain>ATCC MYA-4609 / CBS 101355 / FGSC A1100 / Af293</strain>
    </source>
</reference>
<evidence type="ECO:0000250" key="1"/>
<evidence type="ECO:0000255" key="2"/>
<evidence type="ECO:0000256" key="3">
    <source>
        <dbReference type="SAM" id="MobiDB-lite"/>
    </source>
</evidence>
<evidence type="ECO:0000305" key="4"/>